<keyword id="KW-0027">Amidation</keyword>
<keyword id="KW-0878">Amphibian defense peptide</keyword>
<keyword id="KW-0903">Direct protein sequencing</keyword>
<keyword id="KW-0964">Secreted</keyword>
<name>CDN71_LITEW</name>
<evidence type="ECO:0000269" key="1">
    <source ref="1"/>
</evidence>
<feature type="peptide" id="PRO_0000043766" description="Caeridin-7.1">
    <location>
        <begin position="1"/>
        <end position="13"/>
    </location>
</feature>
<feature type="modified residue" description="Leucine amide" evidence="1">
    <location>
        <position position="13"/>
    </location>
</feature>
<organism>
    <name type="scientific">Litoria ewingii</name>
    <name type="common">Southern brown tree frog</name>
    <name type="synonym">Hyla ewingii</name>
    <dbReference type="NCBI Taxonomy" id="104896"/>
    <lineage>
        <taxon>Eukaryota</taxon>
        <taxon>Metazoa</taxon>
        <taxon>Chordata</taxon>
        <taxon>Craniata</taxon>
        <taxon>Vertebrata</taxon>
        <taxon>Euteleostomi</taxon>
        <taxon>Amphibia</taxon>
        <taxon>Batrachia</taxon>
        <taxon>Anura</taxon>
        <taxon>Neobatrachia</taxon>
        <taxon>Hyloidea</taxon>
        <taxon>Hylidae</taxon>
        <taxon>Pelodryadinae</taxon>
        <taxon>Litoria</taxon>
    </lineage>
</organism>
<protein>
    <recommendedName>
        <fullName>Caeridin-7.1</fullName>
    </recommendedName>
</protein>
<comment type="function">
    <text>Caeridins show neither neuropeptide activity nor antibiotic activity.</text>
</comment>
<comment type="subcellular location">
    <subcellularLocation>
        <location>Secreted</location>
    </subcellularLocation>
</comment>
<comment type="tissue specificity">
    <text>Expressed by the skin dorsal glands.</text>
</comment>
<comment type="mass spectrometry" mass="1330.0" method="FAB" evidence="1"/>
<sequence length="13" mass="1316">GLLDMVTGLLGNL</sequence>
<proteinExistence type="evidence at protein level"/>
<dbReference type="GO" id="GO:0005576">
    <property type="term" value="C:extracellular region"/>
    <property type="evidence" value="ECO:0007669"/>
    <property type="project" value="UniProtKB-SubCell"/>
</dbReference>
<dbReference type="GO" id="GO:0006952">
    <property type="term" value="P:defense response"/>
    <property type="evidence" value="ECO:0007669"/>
    <property type="project" value="UniProtKB-KW"/>
</dbReference>
<reference key="1">
    <citation type="journal article" date="1997" name="Aust. J. Chem.">
        <title>An unusual combination of peptides from the skin glands of Ewing's tree frog, Litoria ewingi. Sequence determination and antimicrobial activity.</title>
        <authorList>
            <person name="Steinborner S.T."/>
            <person name="Bowie J.H."/>
            <person name="Tyler M.J."/>
            <person name="Wallace J.C."/>
        </authorList>
    </citation>
    <scope>PROTEIN SEQUENCE</scope>
    <scope>AMIDATION AT LEU-13</scope>
    <scope>MASS SPECTROMETRY</scope>
    <source>
        <tissue>Skin secretion</tissue>
    </source>
</reference>
<accession>P82051</accession>